<dbReference type="EMBL" id="AE000516">
    <property type="protein sequence ID" value="AAK44901.1"/>
    <property type="molecule type" value="Genomic_DNA"/>
</dbReference>
<dbReference type="PIR" id="D70614">
    <property type="entry name" value="D70614"/>
</dbReference>
<dbReference type="SMR" id="P9WQI0"/>
<dbReference type="KEGG" id="mtc:MT0675"/>
<dbReference type="PATRIC" id="fig|83331.31.peg.718"/>
<dbReference type="HOGENOM" id="CLU_006533_0_1_11"/>
<dbReference type="Proteomes" id="UP000001020">
    <property type="component" value="Chromosome"/>
</dbReference>
<dbReference type="GO" id="GO:0005524">
    <property type="term" value="F:ATP binding"/>
    <property type="evidence" value="ECO:0007669"/>
    <property type="project" value="InterPro"/>
</dbReference>
<dbReference type="GO" id="GO:0004672">
    <property type="term" value="F:protein kinase activity"/>
    <property type="evidence" value="ECO:0007669"/>
    <property type="project" value="InterPro"/>
</dbReference>
<dbReference type="CDD" id="cd05121">
    <property type="entry name" value="ABC1_ADCK3-like"/>
    <property type="match status" value="1"/>
</dbReference>
<dbReference type="InterPro" id="IPR004147">
    <property type="entry name" value="ABC1_dom"/>
</dbReference>
<dbReference type="InterPro" id="IPR011009">
    <property type="entry name" value="Kinase-like_dom_sf"/>
</dbReference>
<dbReference type="InterPro" id="IPR000719">
    <property type="entry name" value="Prot_kinase_dom"/>
</dbReference>
<dbReference type="InterPro" id="IPR050154">
    <property type="entry name" value="UbiB_kinase"/>
</dbReference>
<dbReference type="PANTHER" id="PTHR10566">
    <property type="entry name" value="CHAPERONE-ACTIVITY OF BC1 COMPLEX CABC1 -RELATED"/>
    <property type="match status" value="1"/>
</dbReference>
<dbReference type="PANTHER" id="PTHR10566:SF113">
    <property type="entry name" value="PROTEIN ACTIVITY OF BC1 COMPLEX KINASE 7, CHLOROPLASTIC"/>
    <property type="match status" value="1"/>
</dbReference>
<dbReference type="Pfam" id="PF03109">
    <property type="entry name" value="ABC1"/>
    <property type="match status" value="1"/>
</dbReference>
<dbReference type="SUPFAM" id="SSF56112">
    <property type="entry name" value="Protein kinase-like (PK-like)"/>
    <property type="match status" value="1"/>
</dbReference>
<accession>P9WQI0</accession>
<accession>L0T4B8</accession>
<accession>P96936</accession>
<gene>
    <name type="ordered locus">MT0675</name>
</gene>
<organism>
    <name type="scientific">Mycobacterium tuberculosis (strain CDC 1551 / Oshkosh)</name>
    <dbReference type="NCBI Taxonomy" id="83331"/>
    <lineage>
        <taxon>Bacteria</taxon>
        <taxon>Bacillati</taxon>
        <taxon>Actinomycetota</taxon>
        <taxon>Actinomycetes</taxon>
        <taxon>Mycobacteriales</taxon>
        <taxon>Mycobacteriaceae</taxon>
        <taxon>Mycobacterium</taxon>
        <taxon>Mycobacterium tuberculosis complex</taxon>
    </lineage>
</organism>
<name>Y647_MYCTO</name>
<keyword id="KW-1185">Reference proteome</keyword>
<feature type="chain" id="PRO_0000426772" description="Uncharacterized protein MT0675">
    <location>
        <begin position="1"/>
        <end position="488"/>
    </location>
</feature>
<proteinExistence type="inferred from homology"/>
<reference key="1">
    <citation type="journal article" date="2002" name="J. Bacteriol.">
        <title>Whole-genome comparison of Mycobacterium tuberculosis clinical and laboratory strains.</title>
        <authorList>
            <person name="Fleischmann R.D."/>
            <person name="Alland D."/>
            <person name="Eisen J.A."/>
            <person name="Carpenter L."/>
            <person name="White O."/>
            <person name="Peterson J.D."/>
            <person name="DeBoy R.T."/>
            <person name="Dodson R.J."/>
            <person name="Gwinn M.L."/>
            <person name="Haft D.H."/>
            <person name="Hickey E.K."/>
            <person name="Kolonay J.F."/>
            <person name="Nelson W.C."/>
            <person name="Umayam L.A."/>
            <person name="Ermolaeva M.D."/>
            <person name="Salzberg S.L."/>
            <person name="Delcher A."/>
            <person name="Utterback T.R."/>
            <person name="Weidman J.F."/>
            <person name="Khouri H.M."/>
            <person name="Gill J."/>
            <person name="Mikula A."/>
            <person name="Bishai W."/>
            <person name="Jacobs W.R. Jr."/>
            <person name="Venter J.C."/>
            <person name="Fraser C.M."/>
        </authorList>
    </citation>
    <scope>NUCLEOTIDE SEQUENCE [LARGE SCALE GENOMIC DNA]</scope>
    <source>
        <strain>CDC 1551 / Oshkosh</strain>
    </source>
</reference>
<evidence type="ECO:0000305" key="1"/>
<sequence length="488" mass="54824">MRAEIGPDFRPHYTFGDAYPASERAHVNWELSAPVWHTAQMGSTTHREVAKLDRVPLPVEAARVAATGWQVTRTAVRFIGRLPRKGPWQQKVIKELPQTFADLGPTYVKFGQIIASSPGAFGESLSREFRGLLDRVPPAKTDEVHKLFVEELGDEPARLFASFEEEPFASASIAQVHYATLRSGEEVVVKIQRPGIRRRVAADLQILKRFAQTVELAKLGRRLSAQDVVADFADNLAEELDFRLEAQSMEAWVSHLHASPLGKNIRVPQVHWDFTTERVLTMERVHGIRIDNAAAIRKAGFDGVELVKALLFSVFEGGLRHGLFHGDLHAGNLYVDEAGRIVFFDFGIMGRIDPRTRWLLRELVYALLVKKDHAAAGKIVVLMGAVGTMKPETQAAKDLERFATPLTMQSLGDMSYADIGRQLSALADAYDVKLPRELVLIGKQFLYVERYMKLLAPRWQMMSDPQLTGYFANFMVEVSREHQSDIEV</sequence>
<protein>
    <recommendedName>
        <fullName>Uncharacterized protein MT0675</fullName>
    </recommendedName>
</protein>
<comment type="similarity">
    <text evidence="1">Belongs to the protein kinase superfamily. ADCK protein kinase family.</text>
</comment>